<gene>
    <name type="primary">Pfn1</name>
</gene>
<accession>P62962</accession>
<accession>P10924</accession>
<reference key="1">
    <citation type="journal article" date="1989" name="Nucleic Acids Res.">
        <title>Total coding sequence of profilin cDNA from Mus musculus macrophage.</title>
        <authorList>
            <person name="Sri Widada J."/>
            <person name="Ferraz C."/>
            <person name="Liautard J.P."/>
        </authorList>
    </citation>
    <scope>NUCLEOTIDE SEQUENCE [MRNA]</scope>
</reference>
<reference key="2">
    <citation type="journal article" date="2005" name="Science">
        <title>The transcriptional landscape of the mammalian genome.</title>
        <authorList>
            <person name="Carninci P."/>
            <person name="Kasukawa T."/>
            <person name="Katayama S."/>
            <person name="Gough J."/>
            <person name="Frith M.C."/>
            <person name="Maeda N."/>
            <person name="Oyama R."/>
            <person name="Ravasi T."/>
            <person name="Lenhard B."/>
            <person name="Wells C."/>
            <person name="Kodzius R."/>
            <person name="Shimokawa K."/>
            <person name="Bajic V.B."/>
            <person name="Brenner S.E."/>
            <person name="Batalov S."/>
            <person name="Forrest A.R."/>
            <person name="Zavolan M."/>
            <person name="Davis M.J."/>
            <person name="Wilming L.G."/>
            <person name="Aidinis V."/>
            <person name="Allen J.E."/>
            <person name="Ambesi-Impiombato A."/>
            <person name="Apweiler R."/>
            <person name="Aturaliya R.N."/>
            <person name="Bailey T.L."/>
            <person name="Bansal M."/>
            <person name="Baxter L."/>
            <person name="Beisel K.W."/>
            <person name="Bersano T."/>
            <person name="Bono H."/>
            <person name="Chalk A.M."/>
            <person name="Chiu K.P."/>
            <person name="Choudhary V."/>
            <person name="Christoffels A."/>
            <person name="Clutterbuck D.R."/>
            <person name="Crowe M.L."/>
            <person name="Dalla E."/>
            <person name="Dalrymple B.P."/>
            <person name="de Bono B."/>
            <person name="Della Gatta G."/>
            <person name="di Bernardo D."/>
            <person name="Down T."/>
            <person name="Engstrom P."/>
            <person name="Fagiolini M."/>
            <person name="Faulkner G."/>
            <person name="Fletcher C.F."/>
            <person name="Fukushima T."/>
            <person name="Furuno M."/>
            <person name="Futaki S."/>
            <person name="Gariboldi M."/>
            <person name="Georgii-Hemming P."/>
            <person name="Gingeras T.R."/>
            <person name="Gojobori T."/>
            <person name="Green R.E."/>
            <person name="Gustincich S."/>
            <person name="Harbers M."/>
            <person name="Hayashi Y."/>
            <person name="Hensch T.K."/>
            <person name="Hirokawa N."/>
            <person name="Hill D."/>
            <person name="Huminiecki L."/>
            <person name="Iacono M."/>
            <person name="Ikeo K."/>
            <person name="Iwama A."/>
            <person name="Ishikawa T."/>
            <person name="Jakt M."/>
            <person name="Kanapin A."/>
            <person name="Katoh M."/>
            <person name="Kawasawa Y."/>
            <person name="Kelso J."/>
            <person name="Kitamura H."/>
            <person name="Kitano H."/>
            <person name="Kollias G."/>
            <person name="Krishnan S.P."/>
            <person name="Kruger A."/>
            <person name="Kummerfeld S.K."/>
            <person name="Kurochkin I.V."/>
            <person name="Lareau L.F."/>
            <person name="Lazarevic D."/>
            <person name="Lipovich L."/>
            <person name="Liu J."/>
            <person name="Liuni S."/>
            <person name="McWilliam S."/>
            <person name="Madan Babu M."/>
            <person name="Madera M."/>
            <person name="Marchionni L."/>
            <person name="Matsuda H."/>
            <person name="Matsuzawa S."/>
            <person name="Miki H."/>
            <person name="Mignone F."/>
            <person name="Miyake S."/>
            <person name="Morris K."/>
            <person name="Mottagui-Tabar S."/>
            <person name="Mulder N."/>
            <person name="Nakano N."/>
            <person name="Nakauchi H."/>
            <person name="Ng P."/>
            <person name="Nilsson R."/>
            <person name="Nishiguchi S."/>
            <person name="Nishikawa S."/>
            <person name="Nori F."/>
            <person name="Ohara O."/>
            <person name="Okazaki Y."/>
            <person name="Orlando V."/>
            <person name="Pang K.C."/>
            <person name="Pavan W.J."/>
            <person name="Pavesi G."/>
            <person name="Pesole G."/>
            <person name="Petrovsky N."/>
            <person name="Piazza S."/>
            <person name="Reed J."/>
            <person name="Reid J.F."/>
            <person name="Ring B.Z."/>
            <person name="Ringwald M."/>
            <person name="Rost B."/>
            <person name="Ruan Y."/>
            <person name="Salzberg S.L."/>
            <person name="Sandelin A."/>
            <person name="Schneider C."/>
            <person name="Schoenbach C."/>
            <person name="Sekiguchi K."/>
            <person name="Semple C.A."/>
            <person name="Seno S."/>
            <person name="Sessa L."/>
            <person name="Sheng Y."/>
            <person name="Shibata Y."/>
            <person name="Shimada H."/>
            <person name="Shimada K."/>
            <person name="Silva D."/>
            <person name="Sinclair B."/>
            <person name="Sperling S."/>
            <person name="Stupka E."/>
            <person name="Sugiura K."/>
            <person name="Sultana R."/>
            <person name="Takenaka Y."/>
            <person name="Taki K."/>
            <person name="Tammoja K."/>
            <person name="Tan S.L."/>
            <person name="Tang S."/>
            <person name="Taylor M.S."/>
            <person name="Tegner J."/>
            <person name="Teichmann S.A."/>
            <person name="Ueda H.R."/>
            <person name="van Nimwegen E."/>
            <person name="Verardo R."/>
            <person name="Wei C.L."/>
            <person name="Yagi K."/>
            <person name="Yamanishi H."/>
            <person name="Zabarovsky E."/>
            <person name="Zhu S."/>
            <person name="Zimmer A."/>
            <person name="Hide W."/>
            <person name="Bult C."/>
            <person name="Grimmond S.M."/>
            <person name="Teasdale R.D."/>
            <person name="Liu E.T."/>
            <person name="Brusic V."/>
            <person name="Quackenbush J."/>
            <person name="Wahlestedt C."/>
            <person name="Mattick J.S."/>
            <person name="Hume D.A."/>
            <person name="Kai C."/>
            <person name="Sasaki D."/>
            <person name="Tomaru Y."/>
            <person name="Fukuda S."/>
            <person name="Kanamori-Katayama M."/>
            <person name="Suzuki M."/>
            <person name="Aoki J."/>
            <person name="Arakawa T."/>
            <person name="Iida J."/>
            <person name="Imamura K."/>
            <person name="Itoh M."/>
            <person name="Kato T."/>
            <person name="Kawaji H."/>
            <person name="Kawagashira N."/>
            <person name="Kawashima T."/>
            <person name="Kojima M."/>
            <person name="Kondo S."/>
            <person name="Konno H."/>
            <person name="Nakano K."/>
            <person name="Ninomiya N."/>
            <person name="Nishio T."/>
            <person name="Okada M."/>
            <person name="Plessy C."/>
            <person name="Shibata K."/>
            <person name="Shiraki T."/>
            <person name="Suzuki S."/>
            <person name="Tagami M."/>
            <person name="Waki K."/>
            <person name="Watahiki A."/>
            <person name="Okamura-Oho Y."/>
            <person name="Suzuki H."/>
            <person name="Kawai J."/>
            <person name="Hayashizaki Y."/>
        </authorList>
    </citation>
    <scope>NUCLEOTIDE SEQUENCE [LARGE SCALE MRNA]</scope>
    <source>
        <strain>C57BL/6J</strain>
        <tissue>Embryonic liver</tissue>
    </source>
</reference>
<reference key="3">
    <citation type="journal article" date="2004" name="Genome Res.">
        <title>The status, quality, and expansion of the NIH full-length cDNA project: the Mammalian Gene Collection (MGC).</title>
        <authorList>
            <consortium name="The MGC Project Team"/>
        </authorList>
    </citation>
    <scope>NUCLEOTIDE SEQUENCE [LARGE SCALE MRNA]</scope>
    <source>
        <tissue>Mammary tumor</tissue>
    </source>
</reference>
<reference key="4">
    <citation type="submission" date="2007-03" db="UniProtKB">
        <authorList>
            <person name="Lubec G."/>
            <person name="Klug S."/>
        </authorList>
    </citation>
    <scope>PROTEIN SEQUENCE OF 39-54; 57-70 AND 76-89</scope>
    <scope>IDENTIFICATION BY MASS SPECTROMETRY</scope>
    <source>
        <tissue>Hippocampus</tissue>
    </source>
</reference>
<reference key="5">
    <citation type="journal article" date="2010" name="Cell">
        <title>A tissue-specific atlas of mouse protein phosphorylation and expression.</title>
        <authorList>
            <person name="Huttlin E.L."/>
            <person name="Jedrychowski M.P."/>
            <person name="Elias J.E."/>
            <person name="Goswami T."/>
            <person name="Rad R."/>
            <person name="Beausoleil S.A."/>
            <person name="Villen J."/>
            <person name="Haas W."/>
            <person name="Sowa M.E."/>
            <person name="Gygi S.P."/>
        </authorList>
    </citation>
    <scope>IDENTIFICATION BY MASS SPECTROMETRY [LARGE SCALE ANALYSIS]</scope>
    <source>
        <tissue>Brain</tissue>
        <tissue>Brown adipose tissue</tissue>
        <tissue>Heart</tissue>
        <tissue>Kidney</tissue>
        <tissue>Liver</tissue>
        <tissue>Lung</tissue>
        <tissue>Pancreas</tissue>
        <tissue>Spleen</tissue>
        <tissue>Testis</tissue>
    </source>
</reference>
<keyword id="KW-0007">Acetylation</keyword>
<keyword id="KW-0009">Actin-binding</keyword>
<keyword id="KW-0963">Cytoplasm</keyword>
<keyword id="KW-0206">Cytoskeleton</keyword>
<keyword id="KW-0903">Direct protein sequencing</keyword>
<keyword id="KW-1017">Isopeptide bond</keyword>
<keyword id="KW-0597">Phosphoprotein</keyword>
<keyword id="KW-1185">Reference proteome</keyword>
<keyword id="KW-0832">Ubl conjugation</keyword>
<protein>
    <recommendedName>
        <fullName>Profilin-1</fullName>
    </recommendedName>
    <alternativeName>
        <fullName>Profilin I</fullName>
    </alternativeName>
</protein>
<dbReference type="EMBL" id="X14425">
    <property type="protein sequence ID" value="CAA32586.1"/>
    <property type="molecule type" value="mRNA"/>
</dbReference>
<dbReference type="EMBL" id="AK011066">
    <property type="protein sequence ID" value="BAB27373.1"/>
    <property type="molecule type" value="mRNA"/>
</dbReference>
<dbReference type="EMBL" id="BC002080">
    <property type="protein sequence ID" value="AAH02080.1"/>
    <property type="molecule type" value="mRNA"/>
</dbReference>
<dbReference type="CCDS" id="CCDS24960.1"/>
<dbReference type="PIR" id="S04067">
    <property type="entry name" value="S04067"/>
</dbReference>
<dbReference type="RefSeq" id="NP_035202.1">
    <property type="nucleotide sequence ID" value="NM_011072.4"/>
</dbReference>
<dbReference type="RefSeq" id="XP_030101518.1">
    <property type="nucleotide sequence ID" value="XM_030245658.1"/>
</dbReference>
<dbReference type="RefSeq" id="XP_036012315.1">
    <property type="nucleotide sequence ID" value="XM_036156422.1"/>
</dbReference>
<dbReference type="SMR" id="P62962"/>
<dbReference type="BioGRID" id="202126">
    <property type="interactions" value="39"/>
</dbReference>
<dbReference type="CORUM" id="P62962"/>
<dbReference type="DIP" id="DIP-38075N"/>
<dbReference type="FunCoup" id="P62962">
    <property type="interactions" value="1089"/>
</dbReference>
<dbReference type="IntAct" id="P62962">
    <property type="interactions" value="8"/>
</dbReference>
<dbReference type="MINT" id="P62962"/>
<dbReference type="STRING" id="10090.ENSMUSP00000018437"/>
<dbReference type="GlyGen" id="P62962">
    <property type="glycosylation" value="2 sites, 1 N-linked glycan (1 site), 1 O-linked glycan (1 site)"/>
</dbReference>
<dbReference type="iPTMnet" id="P62962"/>
<dbReference type="MetOSite" id="P62962"/>
<dbReference type="PhosphoSitePlus" id="P62962"/>
<dbReference type="SwissPalm" id="P62962"/>
<dbReference type="REPRODUCTION-2DPAGE" id="IPI00224740"/>
<dbReference type="REPRODUCTION-2DPAGE" id="P62962"/>
<dbReference type="CPTAC" id="non-CPTAC-3933"/>
<dbReference type="jPOST" id="P62962"/>
<dbReference type="PaxDb" id="10090-ENSMUSP00000018437"/>
<dbReference type="PeptideAtlas" id="P62962"/>
<dbReference type="ProteomicsDB" id="291661"/>
<dbReference type="Pumba" id="P62962"/>
<dbReference type="Antibodypedia" id="23487">
    <property type="antibodies" value="454 antibodies from 35 providers"/>
</dbReference>
<dbReference type="DNASU" id="18643"/>
<dbReference type="Ensembl" id="ENSMUST00000018437.3">
    <property type="protein sequence ID" value="ENSMUSP00000018437.3"/>
    <property type="gene ID" value="ENSMUSG00000018293.5"/>
</dbReference>
<dbReference type="GeneID" id="18643"/>
<dbReference type="KEGG" id="mmu:18643"/>
<dbReference type="UCSC" id="uc007jvv.2">
    <property type="organism name" value="mouse"/>
</dbReference>
<dbReference type="AGR" id="MGI:97549"/>
<dbReference type="CTD" id="5216"/>
<dbReference type="MGI" id="MGI:97549">
    <property type="gene designation" value="Pfn1"/>
</dbReference>
<dbReference type="VEuPathDB" id="HostDB:ENSMUSG00000018293"/>
<dbReference type="eggNOG" id="KOG1755">
    <property type="taxonomic scope" value="Eukaryota"/>
</dbReference>
<dbReference type="GeneTree" id="ENSGT00940000153664"/>
<dbReference type="HOGENOM" id="CLU_123405_1_0_1"/>
<dbReference type="InParanoid" id="P62962"/>
<dbReference type="OMA" id="NIAVCMT"/>
<dbReference type="OrthoDB" id="421374at2759"/>
<dbReference type="PhylomeDB" id="P62962"/>
<dbReference type="TreeFam" id="TF331744"/>
<dbReference type="Reactome" id="R-MMU-376176">
    <property type="pathway name" value="Signaling by ROBO receptors"/>
</dbReference>
<dbReference type="Reactome" id="R-MMU-4086400">
    <property type="pathway name" value="PCP/CE pathway"/>
</dbReference>
<dbReference type="Reactome" id="R-MMU-5663220">
    <property type="pathway name" value="RHO GTPases Activate Formins"/>
</dbReference>
<dbReference type="BioGRID-ORCS" id="18643">
    <property type="hits" value="34 hits in 80 CRISPR screens"/>
</dbReference>
<dbReference type="ChiTaRS" id="Pfn1">
    <property type="organism name" value="mouse"/>
</dbReference>
<dbReference type="PRO" id="PR:P62962"/>
<dbReference type="Proteomes" id="UP000000589">
    <property type="component" value="Chromosome 11"/>
</dbReference>
<dbReference type="RNAct" id="P62962">
    <property type="molecule type" value="protein"/>
</dbReference>
<dbReference type="Bgee" id="ENSMUSG00000018293">
    <property type="expression patterns" value="Expressed in granulocyte and 240 other cell types or tissues"/>
</dbReference>
<dbReference type="ExpressionAtlas" id="P62962">
    <property type="expression patterns" value="baseline and differential"/>
</dbReference>
<dbReference type="GO" id="GO:0005938">
    <property type="term" value="C:cell cortex"/>
    <property type="evidence" value="ECO:0007669"/>
    <property type="project" value="Ensembl"/>
</dbReference>
<dbReference type="GO" id="GO:0005737">
    <property type="term" value="C:cytoplasm"/>
    <property type="evidence" value="ECO:0000314"/>
    <property type="project" value="MGI"/>
</dbReference>
<dbReference type="GO" id="GO:0005856">
    <property type="term" value="C:cytoskeleton"/>
    <property type="evidence" value="ECO:0007669"/>
    <property type="project" value="UniProtKB-SubCell"/>
</dbReference>
<dbReference type="GO" id="GO:0005829">
    <property type="term" value="C:cytosol"/>
    <property type="evidence" value="ECO:0000304"/>
    <property type="project" value="Reactome"/>
</dbReference>
<dbReference type="GO" id="GO:0005576">
    <property type="term" value="C:extracellular region"/>
    <property type="evidence" value="ECO:0000304"/>
    <property type="project" value="Reactome"/>
</dbReference>
<dbReference type="GO" id="GO:0098978">
    <property type="term" value="C:glutamatergic synapse"/>
    <property type="evidence" value="ECO:0000314"/>
    <property type="project" value="SynGO"/>
</dbReference>
<dbReference type="GO" id="GO:0005634">
    <property type="term" value="C:nucleus"/>
    <property type="evidence" value="ECO:0000314"/>
    <property type="project" value="MGI"/>
</dbReference>
<dbReference type="GO" id="GO:0003785">
    <property type="term" value="F:actin monomer binding"/>
    <property type="evidence" value="ECO:0007669"/>
    <property type="project" value="Ensembl"/>
</dbReference>
<dbReference type="GO" id="GO:0000774">
    <property type="term" value="F:adenyl-nucleotide exchange factor activity"/>
    <property type="evidence" value="ECO:0007669"/>
    <property type="project" value="Ensembl"/>
</dbReference>
<dbReference type="GO" id="GO:0005546">
    <property type="term" value="F:phosphatidylinositol-4,5-bisphosphate binding"/>
    <property type="evidence" value="ECO:0007669"/>
    <property type="project" value="Ensembl"/>
</dbReference>
<dbReference type="GO" id="GO:0001784">
    <property type="term" value="F:phosphotyrosine residue binding"/>
    <property type="evidence" value="ECO:0007669"/>
    <property type="project" value="Ensembl"/>
</dbReference>
<dbReference type="GO" id="GO:0070064">
    <property type="term" value="F:proline-rich region binding"/>
    <property type="evidence" value="ECO:0007669"/>
    <property type="project" value="Ensembl"/>
</dbReference>
<dbReference type="GO" id="GO:0031267">
    <property type="term" value="F:small GTPase binding"/>
    <property type="evidence" value="ECO:0000353"/>
    <property type="project" value="BHF-UCL"/>
</dbReference>
<dbReference type="GO" id="GO:0030036">
    <property type="term" value="P:actin cytoskeleton organization"/>
    <property type="evidence" value="ECO:0007669"/>
    <property type="project" value="InterPro"/>
</dbReference>
<dbReference type="GO" id="GO:0098885">
    <property type="term" value="P:modification of postsynaptic actin cytoskeleton"/>
    <property type="evidence" value="ECO:0000314"/>
    <property type="project" value="SynGO"/>
</dbReference>
<dbReference type="GO" id="GO:0050804">
    <property type="term" value="P:modulation of chemical synaptic transmission"/>
    <property type="evidence" value="ECO:0000314"/>
    <property type="project" value="SynGO"/>
</dbReference>
<dbReference type="GO" id="GO:0030837">
    <property type="term" value="P:negative regulation of actin filament polymerization"/>
    <property type="evidence" value="ECO:0007669"/>
    <property type="project" value="Ensembl"/>
</dbReference>
<dbReference type="GO" id="GO:0051497">
    <property type="term" value="P:negative regulation of stress fiber assembly"/>
    <property type="evidence" value="ECO:0007669"/>
    <property type="project" value="Ensembl"/>
</dbReference>
<dbReference type="GO" id="GO:0001843">
    <property type="term" value="P:neural tube closure"/>
    <property type="evidence" value="ECO:0000316"/>
    <property type="project" value="MGI"/>
</dbReference>
<dbReference type="GO" id="GO:0030838">
    <property type="term" value="P:positive regulation of actin filament polymerization"/>
    <property type="evidence" value="ECO:0007669"/>
    <property type="project" value="Ensembl"/>
</dbReference>
<dbReference type="GO" id="GO:0010634">
    <property type="term" value="P:positive regulation of epithelial cell migration"/>
    <property type="evidence" value="ECO:0007669"/>
    <property type="project" value="Ensembl"/>
</dbReference>
<dbReference type="GO" id="GO:1900029">
    <property type="term" value="P:positive regulation of ruffle assembly"/>
    <property type="evidence" value="ECO:0007669"/>
    <property type="project" value="Ensembl"/>
</dbReference>
<dbReference type="GO" id="GO:0050821">
    <property type="term" value="P:protein stabilization"/>
    <property type="evidence" value="ECO:0007669"/>
    <property type="project" value="Ensembl"/>
</dbReference>
<dbReference type="GO" id="GO:0008064">
    <property type="term" value="P:regulation of actin polymerization or depolymerization"/>
    <property type="evidence" value="ECO:0000304"/>
    <property type="project" value="MGI"/>
</dbReference>
<dbReference type="GO" id="GO:0006357">
    <property type="term" value="P:regulation of transcription by RNA polymerase II"/>
    <property type="evidence" value="ECO:0000316"/>
    <property type="project" value="MGI"/>
</dbReference>
<dbReference type="GO" id="GO:0060074">
    <property type="term" value="P:synapse maturation"/>
    <property type="evidence" value="ECO:0000314"/>
    <property type="project" value="SynGO"/>
</dbReference>
<dbReference type="CDD" id="cd00148">
    <property type="entry name" value="PROF"/>
    <property type="match status" value="1"/>
</dbReference>
<dbReference type="FunFam" id="3.30.450.30:FF:000008">
    <property type="entry name" value="Profilin"/>
    <property type="match status" value="1"/>
</dbReference>
<dbReference type="Gene3D" id="3.30.450.30">
    <property type="entry name" value="Dynein light chain 2a, cytoplasmic"/>
    <property type="match status" value="1"/>
</dbReference>
<dbReference type="InterPro" id="IPR048278">
    <property type="entry name" value="PFN"/>
</dbReference>
<dbReference type="InterPro" id="IPR005455">
    <property type="entry name" value="PFN_euk"/>
</dbReference>
<dbReference type="InterPro" id="IPR036140">
    <property type="entry name" value="PFN_sf"/>
</dbReference>
<dbReference type="InterPro" id="IPR005454">
    <property type="entry name" value="Profilin1/2/3_vertebrate"/>
</dbReference>
<dbReference type="InterPro" id="IPR027310">
    <property type="entry name" value="Profilin_CS"/>
</dbReference>
<dbReference type="PANTHER" id="PTHR13936">
    <property type="entry name" value="PROFILIN"/>
    <property type="match status" value="1"/>
</dbReference>
<dbReference type="PANTHER" id="PTHR13936:SF14">
    <property type="entry name" value="PROFILIN-1"/>
    <property type="match status" value="1"/>
</dbReference>
<dbReference type="Pfam" id="PF00235">
    <property type="entry name" value="Profilin"/>
    <property type="match status" value="1"/>
</dbReference>
<dbReference type="PRINTS" id="PR01639">
    <property type="entry name" value="PROFILINMAML"/>
</dbReference>
<dbReference type="SMART" id="SM00392">
    <property type="entry name" value="PROF"/>
    <property type="match status" value="1"/>
</dbReference>
<dbReference type="SUPFAM" id="SSF55770">
    <property type="entry name" value="Profilin (actin-binding protein)"/>
    <property type="match status" value="1"/>
</dbReference>
<dbReference type="PROSITE" id="PS00414">
    <property type="entry name" value="PROFILIN"/>
    <property type="match status" value="1"/>
</dbReference>
<sequence length="140" mass="14957">MAGWNAYIDSLMADGTCQDAAIVGYKDSPSVWAAVPGKTFVSITPAEVGVLVGKDRSSFFVNGLTLGGQKCSVIRDSLLQDGEFTMDLRTKSTGGAPTFNVTVTMTAKTLVLLMGKEGVHGGLINKKCYEMASHLRRSQY</sequence>
<feature type="initiator methionine" description="Removed" evidence="1">
    <location>
        <position position="1"/>
    </location>
</feature>
<feature type="chain" id="PRO_0000199572" description="Profilin-1">
    <location>
        <begin position="2"/>
        <end position="140"/>
    </location>
</feature>
<feature type="modified residue" description="N-acetylalanine" evidence="1">
    <location>
        <position position="2"/>
    </location>
</feature>
<feature type="modified residue" description="Phosphoserine" evidence="3">
    <location>
        <position position="28"/>
    </location>
</feature>
<feature type="modified residue" description="Phosphoserine" evidence="2">
    <location>
        <position position="57"/>
    </location>
</feature>
<feature type="modified residue" description="N6-acetyllysine" evidence="2">
    <location>
        <position position="108"/>
    </location>
</feature>
<feature type="modified residue" description="Phosphotyrosine" evidence="2">
    <location>
        <position position="129"/>
    </location>
</feature>
<feature type="modified residue" description="Phosphoserine; by ROCK1" evidence="2">
    <location>
        <position position="138"/>
    </location>
</feature>
<feature type="cross-link" description="Glycyl lysine isopeptide (Lys-Gly) (interchain with G-Cter in SUMO2); alternate" evidence="2">
    <location>
        <position position="54"/>
    </location>
</feature>
<feature type="cross-link" description="Glycyl lysine isopeptide (Lys-Gly) (interchain with G-Cter in ubiquitin); alternate" evidence="2">
    <location>
        <position position="54"/>
    </location>
</feature>
<comment type="function">
    <text evidence="2">Binds to actin and affects the structure of the cytoskeleton. At high concentrations, profilin prevents the polymerization of actin, whereas it enhances it at low concentrations. By binding to PIP2, it inhibits the formation of IP3 and DG. Inhibits androgen receptor (AR) and HTT aggregation and binding of G-actin is essential for its inhibition of AR (By similarity).</text>
</comment>
<comment type="subunit">
    <text evidence="2">Found in a complex with XPO6, Ran, ACTB and PFN1 (By similarity). Interacts with ACTB (By similarity). Interacts with VASP (By similarity). Interacts with HTT (By similarity). Interacts with SH3BGRL (By similarity). Occurs in many kinds of cells as a complex with monomeric actin in a 1:1 ratio (By similarity). Interacts with ACTMAP (By similarity).</text>
</comment>
<comment type="interaction">
    <interactant intactId="EBI-647096">
        <id>P62962</id>
    </interactant>
    <interactant intactId="EBI-78473">
        <id>P03372</id>
        <label>ESR1</label>
    </interactant>
    <organismsDiffer>true</organismsDiffer>
    <experiments>3</experiments>
</comment>
<comment type="subcellular location">
    <subcellularLocation>
        <location>Cytoplasm</location>
        <location>Cytoskeleton</location>
    </subcellularLocation>
</comment>
<comment type="PTM">
    <text evidence="2">Phosphorylation at Ser-138 reduces its affinity for G-actin and blocks its interaction with HTT, reducing its ability to inhibit androgen receptor (AR) and HTT aggregation.</text>
</comment>
<comment type="similarity">
    <text evidence="4">Belongs to the profilin family.</text>
</comment>
<name>PROF1_MOUSE</name>
<proteinExistence type="evidence at protein level"/>
<organism>
    <name type="scientific">Mus musculus</name>
    <name type="common">Mouse</name>
    <dbReference type="NCBI Taxonomy" id="10090"/>
    <lineage>
        <taxon>Eukaryota</taxon>
        <taxon>Metazoa</taxon>
        <taxon>Chordata</taxon>
        <taxon>Craniata</taxon>
        <taxon>Vertebrata</taxon>
        <taxon>Euteleostomi</taxon>
        <taxon>Mammalia</taxon>
        <taxon>Eutheria</taxon>
        <taxon>Euarchontoglires</taxon>
        <taxon>Glires</taxon>
        <taxon>Rodentia</taxon>
        <taxon>Myomorpha</taxon>
        <taxon>Muroidea</taxon>
        <taxon>Muridae</taxon>
        <taxon>Murinae</taxon>
        <taxon>Mus</taxon>
        <taxon>Mus</taxon>
    </lineage>
</organism>
<evidence type="ECO:0000250" key="1">
    <source>
        <dbReference type="UniProtKB" id="P02584"/>
    </source>
</evidence>
<evidence type="ECO:0000250" key="2">
    <source>
        <dbReference type="UniProtKB" id="P07737"/>
    </source>
</evidence>
<evidence type="ECO:0000250" key="3">
    <source>
        <dbReference type="UniProtKB" id="P62963"/>
    </source>
</evidence>
<evidence type="ECO:0000305" key="4"/>